<gene>
    <name evidence="1" type="primary">metG</name>
    <name type="ordered locus">Bamb_2484</name>
</gene>
<feature type="chain" id="PRO_0000331789" description="Methionine--tRNA ligase">
    <location>
        <begin position="1"/>
        <end position="720"/>
    </location>
</feature>
<feature type="domain" description="tRNA-binding" evidence="1">
    <location>
        <begin position="614"/>
        <end position="720"/>
    </location>
</feature>
<feature type="short sequence motif" description="'HIGH' region">
    <location>
        <begin position="27"/>
        <end position="37"/>
    </location>
</feature>
<feature type="short sequence motif" description="'KMSKS' region">
    <location>
        <begin position="348"/>
        <end position="352"/>
    </location>
</feature>
<feature type="binding site" evidence="1">
    <location>
        <position position="158"/>
    </location>
    <ligand>
        <name>Zn(2+)</name>
        <dbReference type="ChEBI" id="CHEBI:29105"/>
    </ligand>
</feature>
<feature type="binding site" evidence="1">
    <location>
        <position position="161"/>
    </location>
    <ligand>
        <name>Zn(2+)</name>
        <dbReference type="ChEBI" id="CHEBI:29105"/>
    </ligand>
</feature>
<feature type="binding site" evidence="1">
    <location>
        <position position="171"/>
    </location>
    <ligand>
        <name>Zn(2+)</name>
        <dbReference type="ChEBI" id="CHEBI:29105"/>
    </ligand>
</feature>
<feature type="binding site" evidence="1">
    <location>
        <position position="174"/>
    </location>
    <ligand>
        <name>Zn(2+)</name>
        <dbReference type="ChEBI" id="CHEBI:29105"/>
    </ligand>
</feature>
<feature type="binding site" evidence="1">
    <location>
        <position position="351"/>
    </location>
    <ligand>
        <name>ATP</name>
        <dbReference type="ChEBI" id="CHEBI:30616"/>
    </ligand>
</feature>
<reference key="1">
    <citation type="submission" date="2006-08" db="EMBL/GenBank/DDBJ databases">
        <title>Complete sequence of chromosome 1 of Burkholderia cepacia AMMD.</title>
        <authorList>
            <person name="Copeland A."/>
            <person name="Lucas S."/>
            <person name="Lapidus A."/>
            <person name="Barry K."/>
            <person name="Detter J.C."/>
            <person name="Glavina del Rio T."/>
            <person name="Hammon N."/>
            <person name="Israni S."/>
            <person name="Pitluck S."/>
            <person name="Bruce D."/>
            <person name="Chain P."/>
            <person name="Malfatti S."/>
            <person name="Shin M."/>
            <person name="Vergez L."/>
            <person name="Schmutz J."/>
            <person name="Larimer F."/>
            <person name="Land M."/>
            <person name="Hauser L."/>
            <person name="Kyrpides N."/>
            <person name="Kim E."/>
            <person name="Parke J."/>
            <person name="Coenye T."/>
            <person name="Konstantinidis K."/>
            <person name="Ramette A."/>
            <person name="Tiedje J."/>
            <person name="Richardson P."/>
        </authorList>
    </citation>
    <scope>NUCLEOTIDE SEQUENCE [LARGE SCALE GENOMIC DNA]</scope>
    <source>
        <strain>ATCC BAA-244 / DSM 16087 / CCUG 44356 / LMG 19182 / AMMD</strain>
    </source>
</reference>
<organism>
    <name type="scientific">Burkholderia ambifaria (strain ATCC BAA-244 / DSM 16087 / CCUG 44356 / LMG 19182 / AMMD)</name>
    <name type="common">Burkholderia cepacia (strain AMMD)</name>
    <dbReference type="NCBI Taxonomy" id="339670"/>
    <lineage>
        <taxon>Bacteria</taxon>
        <taxon>Pseudomonadati</taxon>
        <taxon>Pseudomonadota</taxon>
        <taxon>Betaproteobacteria</taxon>
        <taxon>Burkholderiales</taxon>
        <taxon>Burkholderiaceae</taxon>
        <taxon>Burkholderia</taxon>
        <taxon>Burkholderia cepacia complex</taxon>
    </lineage>
</organism>
<name>SYM_BURCM</name>
<dbReference type="EC" id="6.1.1.10" evidence="1"/>
<dbReference type="EMBL" id="CP000440">
    <property type="protein sequence ID" value="ABI88040.1"/>
    <property type="molecule type" value="Genomic_DNA"/>
</dbReference>
<dbReference type="RefSeq" id="WP_011657654.1">
    <property type="nucleotide sequence ID" value="NC_008390.1"/>
</dbReference>
<dbReference type="SMR" id="Q0BCT3"/>
<dbReference type="GeneID" id="93085310"/>
<dbReference type="KEGG" id="bam:Bamb_2484"/>
<dbReference type="PATRIC" id="fig|339670.21.peg.2428"/>
<dbReference type="eggNOG" id="COG0073">
    <property type="taxonomic scope" value="Bacteria"/>
</dbReference>
<dbReference type="eggNOG" id="COG0143">
    <property type="taxonomic scope" value="Bacteria"/>
</dbReference>
<dbReference type="Proteomes" id="UP000000662">
    <property type="component" value="Chromosome 1"/>
</dbReference>
<dbReference type="GO" id="GO:0005829">
    <property type="term" value="C:cytosol"/>
    <property type="evidence" value="ECO:0007669"/>
    <property type="project" value="TreeGrafter"/>
</dbReference>
<dbReference type="GO" id="GO:0005524">
    <property type="term" value="F:ATP binding"/>
    <property type="evidence" value="ECO:0007669"/>
    <property type="project" value="UniProtKB-UniRule"/>
</dbReference>
<dbReference type="GO" id="GO:0046872">
    <property type="term" value="F:metal ion binding"/>
    <property type="evidence" value="ECO:0007669"/>
    <property type="project" value="UniProtKB-KW"/>
</dbReference>
<dbReference type="GO" id="GO:0004825">
    <property type="term" value="F:methionine-tRNA ligase activity"/>
    <property type="evidence" value="ECO:0007669"/>
    <property type="project" value="UniProtKB-UniRule"/>
</dbReference>
<dbReference type="GO" id="GO:0000049">
    <property type="term" value="F:tRNA binding"/>
    <property type="evidence" value="ECO:0007669"/>
    <property type="project" value="UniProtKB-KW"/>
</dbReference>
<dbReference type="GO" id="GO:0006431">
    <property type="term" value="P:methionyl-tRNA aminoacylation"/>
    <property type="evidence" value="ECO:0007669"/>
    <property type="project" value="UniProtKB-UniRule"/>
</dbReference>
<dbReference type="CDD" id="cd07957">
    <property type="entry name" value="Anticodon_Ia_Met"/>
    <property type="match status" value="1"/>
</dbReference>
<dbReference type="CDD" id="cd00814">
    <property type="entry name" value="MetRS_core"/>
    <property type="match status" value="1"/>
</dbReference>
<dbReference type="CDD" id="cd02800">
    <property type="entry name" value="tRNA_bind_EcMetRS_like"/>
    <property type="match status" value="1"/>
</dbReference>
<dbReference type="FunFam" id="2.20.28.20:FF:000001">
    <property type="entry name" value="Methionine--tRNA ligase"/>
    <property type="match status" value="1"/>
</dbReference>
<dbReference type="FunFam" id="2.40.50.140:FF:000042">
    <property type="entry name" value="Methionine--tRNA ligase"/>
    <property type="match status" value="1"/>
</dbReference>
<dbReference type="Gene3D" id="3.40.50.620">
    <property type="entry name" value="HUPs"/>
    <property type="match status" value="1"/>
</dbReference>
<dbReference type="Gene3D" id="1.10.730.10">
    <property type="entry name" value="Isoleucyl-tRNA Synthetase, Domain 1"/>
    <property type="match status" value="1"/>
</dbReference>
<dbReference type="Gene3D" id="2.20.28.20">
    <property type="entry name" value="Methionyl-tRNA synthetase, Zn-domain"/>
    <property type="match status" value="1"/>
</dbReference>
<dbReference type="Gene3D" id="2.40.50.140">
    <property type="entry name" value="Nucleic acid-binding proteins"/>
    <property type="match status" value="1"/>
</dbReference>
<dbReference type="HAMAP" id="MF_00098">
    <property type="entry name" value="Met_tRNA_synth_type1"/>
    <property type="match status" value="1"/>
</dbReference>
<dbReference type="InterPro" id="IPR001412">
    <property type="entry name" value="aa-tRNA-synth_I_CS"/>
</dbReference>
<dbReference type="InterPro" id="IPR041872">
    <property type="entry name" value="Anticodon_Met"/>
</dbReference>
<dbReference type="InterPro" id="IPR013155">
    <property type="entry name" value="M/V/L/I-tRNA-synth_anticd-bd"/>
</dbReference>
<dbReference type="InterPro" id="IPR004495">
    <property type="entry name" value="Met-tRNA-synth_bsu_C"/>
</dbReference>
<dbReference type="InterPro" id="IPR023458">
    <property type="entry name" value="Met-tRNA_ligase_1"/>
</dbReference>
<dbReference type="InterPro" id="IPR014758">
    <property type="entry name" value="Met-tRNA_synth"/>
</dbReference>
<dbReference type="InterPro" id="IPR015413">
    <property type="entry name" value="Methionyl/Leucyl_tRNA_Synth"/>
</dbReference>
<dbReference type="InterPro" id="IPR033911">
    <property type="entry name" value="MetRS_core"/>
</dbReference>
<dbReference type="InterPro" id="IPR029038">
    <property type="entry name" value="MetRS_Zn"/>
</dbReference>
<dbReference type="InterPro" id="IPR012340">
    <property type="entry name" value="NA-bd_OB-fold"/>
</dbReference>
<dbReference type="InterPro" id="IPR014729">
    <property type="entry name" value="Rossmann-like_a/b/a_fold"/>
</dbReference>
<dbReference type="InterPro" id="IPR002547">
    <property type="entry name" value="tRNA-bd_dom"/>
</dbReference>
<dbReference type="InterPro" id="IPR009080">
    <property type="entry name" value="tRNAsynth_Ia_anticodon-bd"/>
</dbReference>
<dbReference type="NCBIfam" id="TIGR00398">
    <property type="entry name" value="metG"/>
    <property type="match status" value="1"/>
</dbReference>
<dbReference type="NCBIfam" id="TIGR00399">
    <property type="entry name" value="metG_C_term"/>
    <property type="match status" value="1"/>
</dbReference>
<dbReference type="NCBIfam" id="NF001100">
    <property type="entry name" value="PRK00133.1"/>
    <property type="match status" value="1"/>
</dbReference>
<dbReference type="PANTHER" id="PTHR45765">
    <property type="entry name" value="METHIONINE--TRNA LIGASE"/>
    <property type="match status" value="1"/>
</dbReference>
<dbReference type="PANTHER" id="PTHR45765:SF1">
    <property type="entry name" value="METHIONINE--TRNA LIGASE, CYTOPLASMIC"/>
    <property type="match status" value="1"/>
</dbReference>
<dbReference type="Pfam" id="PF08264">
    <property type="entry name" value="Anticodon_1"/>
    <property type="match status" value="1"/>
</dbReference>
<dbReference type="Pfam" id="PF09334">
    <property type="entry name" value="tRNA-synt_1g"/>
    <property type="match status" value="1"/>
</dbReference>
<dbReference type="Pfam" id="PF01588">
    <property type="entry name" value="tRNA_bind"/>
    <property type="match status" value="1"/>
</dbReference>
<dbReference type="PRINTS" id="PR01041">
    <property type="entry name" value="TRNASYNTHMET"/>
</dbReference>
<dbReference type="SUPFAM" id="SSF47323">
    <property type="entry name" value="Anticodon-binding domain of a subclass of class I aminoacyl-tRNA synthetases"/>
    <property type="match status" value="1"/>
</dbReference>
<dbReference type="SUPFAM" id="SSF57770">
    <property type="entry name" value="Methionyl-tRNA synthetase (MetRS), Zn-domain"/>
    <property type="match status" value="1"/>
</dbReference>
<dbReference type="SUPFAM" id="SSF50249">
    <property type="entry name" value="Nucleic acid-binding proteins"/>
    <property type="match status" value="1"/>
</dbReference>
<dbReference type="SUPFAM" id="SSF52374">
    <property type="entry name" value="Nucleotidylyl transferase"/>
    <property type="match status" value="1"/>
</dbReference>
<dbReference type="PROSITE" id="PS00178">
    <property type="entry name" value="AA_TRNA_LIGASE_I"/>
    <property type="match status" value="1"/>
</dbReference>
<dbReference type="PROSITE" id="PS50886">
    <property type="entry name" value="TRBD"/>
    <property type="match status" value="1"/>
</dbReference>
<evidence type="ECO:0000255" key="1">
    <source>
        <dbReference type="HAMAP-Rule" id="MF_00098"/>
    </source>
</evidence>
<accession>Q0BCT3</accession>
<protein>
    <recommendedName>
        <fullName evidence="1">Methionine--tRNA ligase</fullName>
        <ecNumber evidence="1">6.1.1.10</ecNumber>
    </recommendedName>
    <alternativeName>
        <fullName evidence="1">Methionyl-tRNA synthetase</fullName>
        <shortName evidence="1">MetRS</shortName>
    </alternativeName>
</protein>
<comment type="function">
    <text evidence="1">Is required not only for elongation of protein synthesis but also for the initiation of all mRNA translation through initiator tRNA(fMet) aminoacylation.</text>
</comment>
<comment type="catalytic activity">
    <reaction evidence="1">
        <text>tRNA(Met) + L-methionine + ATP = L-methionyl-tRNA(Met) + AMP + diphosphate</text>
        <dbReference type="Rhea" id="RHEA:13481"/>
        <dbReference type="Rhea" id="RHEA-COMP:9667"/>
        <dbReference type="Rhea" id="RHEA-COMP:9698"/>
        <dbReference type="ChEBI" id="CHEBI:30616"/>
        <dbReference type="ChEBI" id="CHEBI:33019"/>
        <dbReference type="ChEBI" id="CHEBI:57844"/>
        <dbReference type="ChEBI" id="CHEBI:78442"/>
        <dbReference type="ChEBI" id="CHEBI:78530"/>
        <dbReference type="ChEBI" id="CHEBI:456215"/>
        <dbReference type="EC" id="6.1.1.10"/>
    </reaction>
</comment>
<comment type="cofactor">
    <cofactor evidence="1">
        <name>Zn(2+)</name>
        <dbReference type="ChEBI" id="CHEBI:29105"/>
    </cofactor>
    <text evidence="1">Binds 1 zinc ion per subunit.</text>
</comment>
<comment type="subunit">
    <text evidence="1">Homodimer.</text>
</comment>
<comment type="subcellular location">
    <subcellularLocation>
        <location evidence="1">Cytoplasm</location>
    </subcellularLocation>
</comment>
<comment type="similarity">
    <text evidence="1">Belongs to the class-I aminoacyl-tRNA synthetase family. MetG type 1 subfamily.</text>
</comment>
<sequence length="720" mass="79328">MSASDLTSVQATAPQGRRQILVTSALPYANGQIHIGHLVEYIQTDIWVRTLRMHGHEVYYIGADDTHGTPVMLRAEKEGLTPKQLIDRVWTEHKRDFDSFGVSFDNFYSTDSDENRVLSESIYLALKENGLIAERAIEQAYDPVKEMFLPDRFIKGECPKCHAKDQYGDNCEVCGSTYLPTELLNPYSVVSGATPVRKTSTHYFFRLSDPRCESFLREWVSGLAQPEATNKMREWLGDAGEAKLADWDISRDAPYFGFEIPGAPGKYFYVWLDAPVGYYASFKNLCDREGIDFDAWIRAGSTAEQYHFIGKDILYFHTLFWPAMLEFSGHRTPTNVFAHGFLTVDGAKMSKSRGTFITAQSYIDTGLNPEWLRYYFAAKLNATMEDIDLNLDDFQARVNSDLVGKYVNIASRAAGFLIKRFDGRVQDSAMNHPLVAKLRDAIASIAAHYEGREYSRALRHTMELADEVNAYVDGAKPWELAKDPANAVALHETCSVSLEAFRLLSLALKPVMPRVAEAVEAFFGVAPLAWADAAKPLSSAQPIKAYQHLMTRVDPKQIDALLAANRDSLQADAAGAAAAGATAANAAKDAKNAKANAKAVAANGADDAPISIDDFAKVDLRIAKIVACQAVEGSDKLLQLTLDIGEEKTRNVFSGIKSAYQPEQLVGKLTVMVANLAPRKMKFGLSEGMVLAASAADEKAEPGLYILEPHSGAKPGMRVK</sequence>
<keyword id="KW-0030">Aminoacyl-tRNA synthetase</keyword>
<keyword id="KW-0067">ATP-binding</keyword>
<keyword id="KW-0963">Cytoplasm</keyword>
<keyword id="KW-0436">Ligase</keyword>
<keyword id="KW-0479">Metal-binding</keyword>
<keyword id="KW-0547">Nucleotide-binding</keyword>
<keyword id="KW-0648">Protein biosynthesis</keyword>
<keyword id="KW-0694">RNA-binding</keyword>
<keyword id="KW-0820">tRNA-binding</keyword>
<keyword id="KW-0862">Zinc</keyword>
<proteinExistence type="inferred from homology"/>